<gene>
    <name evidence="1" type="primary">plsY</name>
    <name type="ordered locus">Mfl337</name>
</gene>
<accession>Q6F1C9</accession>
<dbReference type="EC" id="2.3.1.275" evidence="1"/>
<dbReference type="EMBL" id="AE017263">
    <property type="protein sequence ID" value="AAT75694.1"/>
    <property type="molecule type" value="Genomic_DNA"/>
</dbReference>
<dbReference type="RefSeq" id="WP_011183234.1">
    <property type="nucleotide sequence ID" value="NC_006055.1"/>
</dbReference>
<dbReference type="RefSeq" id="YP_053578.1">
    <property type="nucleotide sequence ID" value="NC_006055.1"/>
</dbReference>
<dbReference type="SMR" id="Q6F1C9"/>
<dbReference type="STRING" id="265311.Mfl337"/>
<dbReference type="PaxDb" id="265311-Mfl337"/>
<dbReference type="EnsemblBacteria" id="AAT75694">
    <property type="protein sequence ID" value="AAT75694"/>
    <property type="gene ID" value="Mfl337"/>
</dbReference>
<dbReference type="GeneID" id="2897641"/>
<dbReference type="KEGG" id="mfl:Mfl337"/>
<dbReference type="PATRIC" id="fig|265311.5.peg.337"/>
<dbReference type="eggNOG" id="COG0344">
    <property type="taxonomic scope" value="Bacteria"/>
</dbReference>
<dbReference type="HOGENOM" id="CLU_081254_3_0_14"/>
<dbReference type="OrthoDB" id="9777124at2"/>
<dbReference type="UniPathway" id="UPA00085"/>
<dbReference type="Proteomes" id="UP000006647">
    <property type="component" value="Chromosome"/>
</dbReference>
<dbReference type="GO" id="GO:0005886">
    <property type="term" value="C:plasma membrane"/>
    <property type="evidence" value="ECO:0007669"/>
    <property type="project" value="UniProtKB-SubCell"/>
</dbReference>
<dbReference type="GO" id="GO:0043772">
    <property type="term" value="F:acyl-phosphate glycerol-3-phosphate acyltransferase activity"/>
    <property type="evidence" value="ECO:0007669"/>
    <property type="project" value="UniProtKB-UniRule"/>
</dbReference>
<dbReference type="GO" id="GO:0008654">
    <property type="term" value="P:phospholipid biosynthetic process"/>
    <property type="evidence" value="ECO:0007669"/>
    <property type="project" value="UniProtKB-UniRule"/>
</dbReference>
<dbReference type="HAMAP" id="MF_01043">
    <property type="entry name" value="PlsY"/>
    <property type="match status" value="1"/>
</dbReference>
<dbReference type="InterPro" id="IPR003811">
    <property type="entry name" value="G3P_acylTferase_PlsY"/>
</dbReference>
<dbReference type="NCBIfam" id="NF010976">
    <property type="entry name" value="PRK14399.1"/>
    <property type="match status" value="1"/>
</dbReference>
<dbReference type="PANTHER" id="PTHR30309:SF0">
    <property type="entry name" value="GLYCEROL-3-PHOSPHATE ACYLTRANSFERASE-RELATED"/>
    <property type="match status" value="1"/>
</dbReference>
<dbReference type="PANTHER" id="PTHR30309">
    <property type="entry name" value="INNER MEMBRANE PROTEIN YGIH"/>
    <property type="match status" value="1"/>
</dbReference>
<dbReference type="Pfam" id="PF02660">
    <property type="entry name" value="G3P_acyltransf"/>
    <property type="match status" value="1"/>
</dbReference>
<dbReference type="SMART" id="SM01207">
    <property type="entry name" value="G3P_acyltransf"/>
    <property type="match status" value="1"/>
</dbReference>
<name>PLSY_MESFL</name>
<proteinExistence type="inferred from homology"/>
<reference key="1">
    <citation type="submission" date="2004-06" db="EMBL/GenBank/DDBJ databases">
        <authorList>
            <person name="Birren B.W."/>
            <person name="Stange-Thomann N."/>
            <person name="Hafez N."/>
            <person name="DeCaprio D."/>
            <person name="Fisher S."/>
            <person name="Butler J."/>
            <person name="Elkins T."/>
            <person name="Kodira C.D."/>
            <person name="Major J."/>
            <person name="Wang S."/>
            <person name="Nicol R."/>
            <person name="Nusbaum C."/>
        </authorList>
    </citation>
    <scope>NUCLEOTIDE SEQUENCE [LARGE SCALE GENOMIC DNA]</scope>
    <source>
        <strain>ATCC 33453 / NBRC 100688 / NCTC 11704 / L1</strain>
    </source>
</reference>
<comment type="function">
    <text evidence="1">Catalyzes the transfer of an acyl group from acyl-phosphate (acyl-PO(4)) to glycerol-3-phosphate (G3P) to form lysophosphatidic acid (LPA). This enzyme utilizes acyl-phosphate as fatty acyl donor, but not acyl-CoA or acyl-ACP.</text>
</comment>
<comment type="catalytic activity">
    <reaction evidence="1">
        <text>an acyl phosphate + sn-glycerol 3-phosphate = a 1-acyl-sn-glycero-3-phosphate + phosphate</text>
        <dbReference type="Rhea" id="RHEA:34075"/>
        <dbReference type="ChEBI" id="CHEBI:43474"/>
        <dbReference type="ChEBI" id="CHEBI:57597"/>
        <dbReference type="ChEBI" id="CHEBI:57970"/>
        <dbReference type="ChEBI" id="CHEBI:59918"/>
        <dbReference type="EC" id="2.3.1.275"/>
    </reaction>
</comment>
<comment type="pathway">
    <text evidence="1">Lipid metabolism; phospholipid metabolism.</text>
</comment>
<comment type="subunit">
    <text evidence="1">Probably interacts with PlsX.</text>
</comment>
<comment type="subcellular location">
    <subcellularLocation>
        <location evidence="1">Cell membrane</location>
        <topology evidence="1">Multi-pass membrane protein</topology>
    </subcellularLocation>
</comment>
<comment type="similarity">
    <text evidence="1">Belongs to the PlsY family.</text>
</comment>
<protein>
    <recommendedName>
        <fullName evidence="1">Glycerol-3-phosphate acyltransferase</fullName>
    </recommendedName>
    <alternativeName>
        <fullName evidence="1">Acyl-PO4 G3P acyltransferase</fullName>
    </alternativeName>
    <alternativeName>
        <fullName evidence="1">Acyl-phosphate--glycerol-3-phosphate acyltransferase</fullName>
    </alternativeName>
    <alternativeName>
        <fullName evidence="1">G3P acyltransferase</fullName>
        <shortName evidence="1">GPAT</shortName>
        <ecNumber evidence="1">2.3.1.275</ecNumber>
    </alternativeName>
    <alternativeName>
        <fullName evidence="1">Lysophosphatidic acid synthase</fullName>
        <shortName evidence="1">LPA synthase</shortName>
    </alternativeName>
</protein>
<evidence type="ECO:0000255" key="1">
    <source>
        <dbReference type="HAMAP-Rule" id="MF_01043"/>
    </source>
</evidence>
<feature type="chain" id="PRO_0000188399" description="Glycerol-3-phosphate acyltransferase">
    <location>
        <begin position="1"/>
        <end position="256"/>
    </location>
</feature>
<feature type="transmembrane region" description="Helical" evidence="1">
    <location>
        <begin position="2"/>
        <end position="22"/>
    </location>
</feature>
<feature type="transmembrane region" description="Helical" evidence="1">
    <location>
        <begin position="58"/>
        <end position="78"/>
    </location>
</feature>
<feature type="transmembrane region" description="Helical" evidence="1">
    <location>
        <begin position="90"/>
        <end position="110"/>
    </location>
</feature>
<feature type="transmembrane region" description="Helical" evidence="1">
    <location>
        <begin position="123"/>
        <end position="143"/>
    </location>
</feature>
<feature type="transmembrane region" description="Helical" evidence="1">
    <location>
        <begin position="153"/>
        <end position="173"/>
    </location>
</feature>
<feature type="transmembrane region" description="Helical" evidence="1">
    <location>
        <begin position="211"/>
        <end position="231"/>
    </location>
</feature>
<organism>
    <name type="scientific">Mesoplasma florum (strain ATCC 33453 / NBRC 100688 / NCTC 11704 / L1)</name>
    <name type="common">Acholeplasma florum</name>
    <dbReference type="NCBI Taxonomy" id="265311"/>
    <lineage>
        <taxon>Bacteria</taxon>
        <taxon>Bacillati</taxon>
        <taxon>Mycoplasmatota</taxon>
        <taxon>Mollicutes</taxon>
        <taxon>Entomoplasmatales</taxon>
        <taxon>Entomoplasmataceae</taxon>
        <taxon>Mesoplasma</taxon>
    </lineage>
</organism>
<keyword id="KW-1003">Cell membrane</keyword>
<keyword id="KW-0444">Lipid biosynthesis</keyword>
<keyword id="KW-0443">Lipid metabolism</keyword>
<keyword id="KW-0472">Membrane</keyword>
<keyword id="KW-0594">Phospholipid biosynthesis</keyword>
<keyword id="KW-1208">Phospholipid metabolism</keyword>
<keyword id="KW-1185">Reference proteome</keyword>
<keyword id="KW-0808">Transferase</keyword>
<keyword id="KW-0812">Transmembrane</keyword>
<keyword id="KW-1133">Transmembrane helix</keyword>
<sequence length="256" mass="29012">MFPYLGIIIASIFGYLLGSVLWSVPITKWVKGVSIYEVGSNNPGATNTVRILGKRWGLAVALLDGFKVLITAAFAIGLSMIPNELFSKTSYFIPCIFVLIGHCWPIWFKFKGGKAVSCFLGLLIVVNYLYFLIFFIVWWIFAFKYRKVSLSSIIGTATILLLMWLPWTYGVMGYSLFNGYDSFIVAWDKHIVFSFYNLFHKFSSNIHGSNFADGMLTGQIVILIGMVILVVRHKSNIVKLKNKTEQPIYPKKEKNV</sequence>